<dbReference type="EC" id="5.6.1.7" evidence="1"/>
<dbReference type="EMBL" id="CP000726">
    <property type="protein sequence ID" value="ABS35786.1"/>
    <property type="molecule type" value="Genomic_DNA"/>
</dbReference>
<dbReference type="RefSeq" id="WP_003357641.1">
    <property type="nucleotide sequence ID" value="NC_009697.1"/>
</dbReference>
<dbReference type="SMR" id="A7FYP3"/>
<dbReference type="GeneID" id="5185850"/>
<dbReference type="KEGG" id="cba:CLB_3354"/>
<dbReference type="HOGENOM" id="CLU_016503_3_0_9"/>
<dbReference type="GO" id="GO:0005737">
    <property type="term" value="C:cytoplasm"/>
    <property type="evidence" value="ECO:0007669"/>
    <property type="project" value="UniProtKB-SubCell"/>
</dbReference>
<dbReference type="GO" id="GO:0005524">
    <property type="term" value="F:ATP binding"/>
    <property type="evidence" value="ECO:0007669"/>
    <property type="project" value="UniProtKB-UniRule"/>
</dbReference>
<dbReference type="GO" id="GO:0140662">
    <property type="term" value="F:ATP-dependent protein folding chaperone"/>
    <property type="evidence" value="ECO:0007669"/>
    <property type="project" value="InterPro"/>
</dbReference>
<dbReference type="GO" id="GO:0016853">
    <property type="term" value="F:isomerase activity"/>
    <property type="evidence" value="ECO:0007669"/>
    <property type="project" value="UniProtKB-KW"/>
</dbReference>
<dbReference type="GO" id="GO:0051082">
    <property type="term" value="F:unfolded protein binding"/>
    <property type="evidence" value="ECO:0007669"/>
    <property type="project" value="UniProtKB-UniRule"/>
</dbReference>
<dbReference type="GO" id="GO:0042026">
    <property type="term" value="P:protein refolding"/>
    <property type="evidence" value="ECO:0007669"/>
    <property type="project" value="UniProtKB-UniRule"/>
</dbReference>
<dbReference type="CDD" id="cd03344">
    <property type="entry name" value="GroEL"/>
    <property type="match status" value="1"/>
</dbReference>
<dbReference type="FunFam" id="3.50.7.10:FF:000001">
    <property type="entry name" value="60 kDa chaperonin"/>
    <property type="match status" value="1"/>
</dbReference>
<dbReference type="Gene3D" id="3.50.7.10">
    <property type="entry name" value="GroEL"/>
    <property type="match status" value="1"/>
</dbReference>
<dbReference type="Gene3D" id="1.10.560.10">
    <property type="entry name" value="GroEL-like equatorial domain"/>
    <property type="match status" value="1"/>
</dbReference>
<dbReference type="Gene3D" id="3.30.260.10">
    <property type="entry name" value="TCP-1-like chaperonin intermediate domain"/>
    <property type="match status" value="1"/>
</dbReference>
<dbReference type="HAMAP" id="MF_00600">
    <property type="entry name" value="CH60"/>
    <property type="match status" value="1"/>
</dbReference>
<dbReference type="InterPro" id="IPR018370">
    <property type="entry name" value="Chaperonin_Cpn60_CS"/>
</dbReference>
<dbReference type="InterPro" id="IPR001844">
    <property type="entry name" value="Cpn60/GroEL"/>
</dbReference>
<dbReference type="InterPro" id="IPR002423">
    <property type="entry name" value="Cpn60/GroEL/TCP-1"/>
</dbReference>
<dbReference type="InterPro" id="IPR027409">
    <property type="entry name" value="GroEL-like_apical_dom_sf"/>
</dbReference>
<dbReference type="InterPro" id="IPR027413">
    <property type="entry name" value="GROEL-like_equatorial_sf"/>
</dbReference>
<dbReference type="InterPro" id="IPR027410">
    <property type="entry name" value="TCP-1-like_intermed_sf"/>
</dbReference>
<dbReference type="NCBIfam" id="TIGR02348">
    <property type="entry name" value="GroEL"/>
    <property type="match status" value="1"/>
</dbReference>
<dbReference type="NCBIfam" id="NF000592">
    <property type="entry name" value="PRK00013.1"/>
    <property type="match status" value="1"/>
</dbReference>
<dbReference type="NCBIfam" id="NF009487">
    <property type="entry name" value="PRK12849.1"/>
    <property type="match status" value="1"/>
</dbReference>
<dbReference type="NCBIfam" id="NF009488">
    <property type="entry name" value="PRK12850.1"/>
    <property type="match status" value="1"/>
</dbReference>
<dbReference type="NCBIfam" id="NF009489">
    <property type="entry name" value="PRK12851.1"/>
    <property type="match status" value="1"/>
</dbReference>
<dbReference type="PANTHER" id="PTHR45633">
    <property type="entry name" value="60 KDA HEAT SHOCK PROTEIN, MITOCHONDRIAL"/>
    <property type="match status" value="1"/>
</dbReference>
<dbReference type="Pfam" id="PF00118">
    <property type="entry name" value="Cpn60_TCP1"/>
    <property type="match status" value="1"/>
</dbReference>
<dbReference type="PRINTS" id="PR00298">
    <property type="entry name" value="CHAPERONIN60"/>
</dbReference>
<dbReference type="SUPFAM" id="SSF52029">
    <property type="entry name" value="GroEL apical domain-like"/>
    <property type="match status" value="1"/>
</dbReference>
<dbReference type="SUPFAM" id="SSF48592">
    <property type="entry name" value="GroEL equatorial domain-like"/>
    <property type="match status" value="1"/>
</dbReference>
<dbReference type="SUPFAM" id="SSF54849">
    <property type="entry name" value="GroEL-intermediate domain like"/>
    <property type="match status" value="1"/>
</dbReference>
<dbReference type="PROSITE" id="PS00296">
    <property type="entry name" value="CHAPERONINS_CPN60"/>
    <property type="match status" value="1"/>
</dbReference>
<feature type="chain" id="PRO_1000025772" description="Chaperonin GroEL">
    <location>
        <begin position="1"/>
        <end position="541"/>
    </location>
</feature>
<feature type="binding site" evidence="1">
    <location>
        <begin position="29"/>
        <end position="32"/>
    </location>
    <ligand>
        <name>ATP</name>
        <dbReference type="ChEBI" id="CHEBI:30616"/>
    </ligand>
</feature>
<feature type="binding site" evidence="1">
    <location>
        <begin position="86"/>
        <end position="90"/>
    </location>
    <ligand>
        <name>ATP</name>
        <dbReference type="ChEBI" id="CHEBI:30616"/>
    </ligand>
</feature>
<feature type="binding site" evidence="1">
    <location>
        <position position="413"/>
    </location>
    <ligand>
        <name>ATP</name>
        <dbReference type="ChEBI" id="CHEBI:30616"/>
    </ligand>
</feature>
<feature type="binding site" evidence="1">
    <location>
        <begin position="477"/>
        <end position="479"/>
    </location>
    <ligand>
        <name>ATP</name>
        <dbReference type="ChEBI" id="CHEBI:30616"/>
    </ligand>
</feature>
<feature type="binding site" evidence="1">
    <location>
        <position position="493"/>
    </location>
    <ligand>
        <name>ATP</name>
        <dbReference type="ChEBI" id="CHEBI:30616"/>
    </ligand>
</feature>
<protein>
    <recommendedName>
        <fullName evidence="1">Chaperonin GroEL</fullName>
        <ecNumber evidence="1">5.6.1.7</ecNumber>
    </recommendedName>
    <alternativeName>
        <fullName evidence="1">60 kDa chaperonin</fullName>
    </alternativeName>
    <alternativeName>
        <fullName evidence="1">Chaperonin-60</fullName>
        <shortName evidence="1">Cpn60</shortName>
    </alternativeName>
</protein>
<name>CH60_CLOB1</name>
<evidence type="ECO:0000255" key="1">
    <source>
        <dbReference type="HAMAP-Rule" id="MF_00600"/>
    </source>
</evidence>
<proteinExistence type="inferred from homology"/>
<accession>A7FYP3</accession>
<organism>
    <name type="scientific">Clostridium botulinum (strain ATCC 19397 / Type A)</name>
    <dbReference type="NCBI Taxonomy" id="441770"/>
    <lineage>
        <taxon>Bacteria</taxon>
        <taxon>Bacillati</taxon>
        <taxon>Bacillota</taxon>
        <taxon>Clostridia</taxon>
        <taxon>Eubacteriales</taxon>
        <taxon>Clostridiaceae</taxon>
        <taxon>Clostridium</taxon>
    </lineage>
</organism>
<reference key="1">
    <citation type="journal article" date="2007" name="PLoS ONE">
        <title>Analysis of the neurotoxin complex genes in Clostridium botulinum A1-A4 and B1 strains: BoNT/A3, /Ba4 and /B1 clusters are located within plasmids.</title>
        <authorList>
            <person name="Smith T.J."/>
            <person name="Hill K.K."/>
            <person name="Foley B.T."/>
            <person name="Detter J.C."/>
            <person name="Munk A.C."/>
            <person name="Bruce D.C."/>
            <person name="Doggett N.A."/>
            <person name="Smith L.A."/>
            <person name="Marks J.D."/>
            <person name="Xie G."/>
            <person name="Brettin T.S."/>
        </authorList>
    </citation>
    <scope>NUCLEOTIDE SEQUENCE [LARGE SCALE GENOMIC DNA]</scope>
    <source>
        <strain>ATCC 19397 / Type A</strain>
    </source>
</reference>
<sequence length="541" mass="57922">MAKSLLFGEQARRSMEAGVDKLADTVRVTLGPKGRNVVLDKKFGSPLITNDGVTIAREIELEDPYENMGAQLVKEVATKTNDVAGDGTTTATLLAQAIIREGLKNVTAGANPIQIRTGIRKAVEKAVEEIKVISKPVNGKEDIARVAAISAASEEVGKLIADAMERVGNDGVITVEESKSMGTDLEVVEGMQFDRGYVSAYMVTDTEKMEAVLDDVYILITDKKISNIQEILPILEQIVQQGKKLLIISEDIEGEALSTLVLNKLRGTFTCVGVKAPGFGDRRKEMLQDIAILTGGEVISEELGRDLKDVTIDMLGTADSVKVTKENTTIVNGKGDKVAIKERVSQIRVQIEDTTSEFDKEKLQERLAKLAGGVAVIRVGAATETELKEEKLRIEDALAATKAAVEEGIVPGGGTAYIDIIPKIADLTSDIIDVKLGIDIIRKALEEPVRQIANNAGAEGSVIIEKVKATEAGVGYDALNDKYVDMLKTGIVDPTKVTRSALQNAASIASTFLTTEAAVADIPEKENTPPMAPGMGMDGMY</sequence>
<keyword id="KW-0067">ATP-binding</keyword>
<keyword id="KW-0143">Chaperone</keyword>
<keyword id="KW-0963">Cytoplasm</keyword>
<keyword id="KW-0413">Isomerase</keyword>
<keyword id="KW-0547">Nucleotide-binding</keyword>
<comment type="function">
    <text evidence="1">Together with its co-chaperonin GroES, plays an essential role in assisting protein folding. The GroEL-GroES system forms a nano-cage that allows encapsulation of the non-native substrate proteins and provides a physical environment optimized to promote and accelerate protein folding.</text>
</comment>
<comment type="catalytic activity">
    <reaction evidence="1">
        <text>ATP + H2O + a folded polypeptide = ADP + phosphate + an unfolded polypeptide.</text>
        <dbReference type="EC" id="5.6.1.7"/>
    </reaction>
</comment>
<comment type="subunit">
    <text evidence="1">Forms a cylinder of 14 subunits composed of two heptameric rings stacked back-to-back. Interacts with the co-chaperonin GroES.</text>
</comment>
<comment type="subcellular location">
    <subcellularLocation>
        <location evidence="1">Cytoplasm</location>
    </subcellularLocation>
</comment>
<comment type="similarity">
    <text evidence="1">Belongs to the chaperonin (HSP60) family.</text>
</comment>
<gene>
    <name evidence="1" type="primary">groEL</name>
    <name evidence="1" type="synonym">groL</name>
    <name type="ordered locus">CLB_3354</name>
</gene>